<keyword id="KW-1003">Cell membrane</keyword>
<keyword id="KW-0350">Heme biosynthesis</keyword>
<keyword id="KW-0472">Membrane</keyword>
<keyword id="KW-0808">Transferase</keyword>
<keyword id="KW-0812">Transmembrane</keyword>
<keyword id="KW-1133">Transmembrane helix</keyword>
<dbReference type="EC" id="2.5.1.141" evidence="1"/>
<dbReference type="EMBL" id="CP000479">
    <property type="protein sequence ID" value="ABK64550.1"/>
    <property type="status" value="ALT_INIT"/>
    <property type="molecule type" value="Genomic_DNA"/>
</dbReference>
<dbReference type="RefSeq" id="WP_023861225.1">
    <property type="nucleotide sequence ID" value="NC_008595.1"/>
</dbReference>
<dbReference type="SMR" id="A0QHX0"/>
<dbReference type="KEGG" id="mav:MAV_3326"/>
<dbReference type="HOGENOM" id="CLU_029631_0_1_11"/>
<dbReference type="UniPathway" id="UPA00834">
    <property type="reaction ID" value="UER00712"/>
</dbReference>
<dbReference type="Proteomes" id="UP000001574">
    <property type="component" value="Chromosome"/>
</dbReference>
<dbReference type="GO" id="GO:0005886">
    <property type="term" value="C:plasma membrane"/>
    <property type="evidence" value="ECO:0007669"/>
    <property type="project" value="UniProtKB-SubCell"/>
</dbReference>
<dbReference type="GO" id="GO:0008495">
    <property type="term" value="F:protoheme IX farnesyltransferase activity"/>
    <property type="evidence" value="ECO:0007669"/>
    <property type="project" value="UniProtKB-UniRule"/>
</dbReference>
<dbReference type="GO" id="GO:0048034">
    <property type="term" value="P:heme O biosynthetic process"/>
    <property type="evidence" value="ECO:0007669"/>
    <property type="project" value="UniProtKB-UniRule"/>
</dbReference>
<dbReference type="CDD" id="cd13957">
    <property type="entry name" value="PT_UbiA_Cox10"/>
    <property type="match status" value="1"/>
</dbReference>
<dbReference type="FunFam" id="1.10.357.140:FF:000001">
    <property type="entry name" value="Protoheme IX farnesyltransferase"/>
    <property type="match status" value="1"/>
</dbReference>
<dbReference type="Gene3D" id="1.10.357.140">
    <property type="entry name" value="UbiA prenyltransferase"/>
    <property type="match status" value="1"/>
</dbReference>
<dbReference type="HAMAP" id="MF_00154">
    <property type="entry name" value="CyoE_CtaB"/>
    <property type="match status" value="1"/>
</dbReference>
<dbReference type="InterPro" id="IPR006369">
    <property type="entry name" value="Protohaem_IX_farnesylTrfase"/>
</dbReference>
<dbReference type="InterPro" id="IPR000537">
    <property type="entry name" value="UbiA_prenyltransferase"/>
</dbReference>
<dbReference type="InterPro" id="IPR044878">
    <property type="entry name" value="UbiA_sf"/>
</dbReference>
<dbReference type="NCBIfam" id="TIGR01473">
    <property type="entry name" value="cyoE_ctaB"/>
    <property type="match status" value="1"/>
</dbReference>
<dbReference type="NCBIfam" id="NF003349">
    <property type="entry name" value="PRK04375.1-2"/>
    <property type="match status" value="1"/>
</dbReference>
<dbReference type="PANTHER" id="PTHR43448:SF7">
    <property type="entry name" value="4-HYDROXYBENZOATE SOLANESYLTRANSFERASE"/>
    <property type="match status" value="1"/>
</dbReference>
<dbReference type="PANTHER" id="PTHR43448">
    <property type="entry name" value="PROTOHEME IX FARNESYLTRANSFERASE, MITOCHONDRIAL"/>
    <property type="match status" value="1"/>
</dbReference>
<dbReference type="Pfam" id="PF01040">
    <property type="entry name" value="UbiA"/>
    <property type="match status" value="1"/>
</dbReference>
<sequence length="308" mass="33288">MSVRGRVAPSQTPSRIPGTVLAYLALTKPRVIELLLVTAIPAMLLAQRGTVNPLLIVNTLIGGMLAAGGANALNCVADADIDKVMKRTARRPLARAAVPTRNALVFGLVLTAGSFLWLWWTTNLLSGLLALATIAFYVFIYTLLLKRRTSQNVVWGGAAGCMPVMIGWSAVTGTIQWPALVMFAIIFFWTPPHTWALAMRYKDDYKAAGVPMLPAVATERQVTKQILVYTWLTVLATLALALATGWLYAAVAVVAGVWFLAMAHQLYAGVRAGEPVKPLRLFLQSNNYLAVVFCALAIDSAIGLPHLF</sequence>
<name>COXX_MYCA1</name>
<organism>
    <name type="scientific">Mycobacterium avium (strain 104)</name>
    <dbReference type="NCBI Taxonomy" id="243243"/>
    <lineage>
        <taxon>Bacteria</taxon>
        <taxon>Bacillati</taxon>
        <taxon>Actinomycetota</taxon>
        <taxon>Actinomycetes</taxon>
        <taxon>Mycobacteriales</taxon>
        <taxon>Mycobacteriaceae</taxon>
        <taxon>Mycobacterium</taxon>
        <taxon>Mycobacterium avium complex (MAC)</taxon>
    </lineage>
</organism>
<accession>A0QHX0</accession>
<proteinExistence type="inferred from homology"/>
<reference key="1">
    <citation type="submission" date="2006-10" db="EMBL/GenBank/DDBJ databases">
        <authorList>
            <person name="Fleischmann R.D."/>
            <person name="Dodson R.J."/>
            <person name="Haft D.H."/>
            <person name="Merkel J.S."/>
            <person name="Nelson W.C."/>
            <person name="Fraser C.M."/>
        </authorList>
    </citation>
    <scope>NUCLEOTIDE SEQUENCE [LARGE SCALE GENOMIC DNA]</scope>
    <source>
        <strain>104</strain>
    </source>
</reference>
<evidence type="ECO:0000255" key="1">
    <source>
        <dbReference type="HAMAP-Rule" id="MF_00154"/>
    </source>
</evidence>
<evidence type="ECO:0000305" key="2"/>
<feature type="chain" id="PRO_0000327081" description="Protoheme IX farnesyltransferase">
    <location>
        <begin position="1"/>
        <end position="308"/>
    </location>
</feature>
<feature type="transmembrane region" description="Helical" evidence="1">
    <location>
        <begin position="31"/>
        <end position="51"/>
    </location>
</feature>
<feature type="transmembrane region" description="Helical" evidence="1">
    <location>
        <begin position="53"/>
        <end position="73"/>
    </location>
</feature>
<feature type="transmembrane region" description="Helical" evidence="1">
    <location>
        <begin position="102"/>
        <end position="122"/>
    </location>
</feature>
<feature type="transmembrane region" description="Helical" evidence="1">
    <location>
        <begin position="124"/>
        <end position="144"/>
    </location>
</feature>
<feature type="transmembrane region" description="Helical" evidence="1">
    <location>
        <begin position="149"/>
        <end position="169"/>
    </location>
</feature>
<feature type="transmembrane region" description="Helical" evidence="1">
    <location>
        <begin position="170"/>
        <end position="190"/>
    </location>
</feature>
<feature type="transmembrane region" description="Helical" evidence="1">
    <location>
        <begin position="240"/>
        <end position="260"/>
    </location>
</feature>
<feature type="transmembrane region" description="Helical" evidence="1">
    <location>
        <begin position="288"/>
        <end position="308"/>
    </location>
</feature>
<gene>
    <name evidence="1" type="primary">ctaB</name>
    <name type="ordered locus">MAV_3326</name>
</gene>
<comment type="function">
    <text evidence="1">Converts heme B (protoheme IX) to heme O by substitution of the vinyl group on carbon 2 of heme B porphyrin ring with a hydroxyethyl farnesyl side group.</text>
</comment>
<comment type="catalytic activity">
    <reaction evidence="1">
        <text>heme b + (2E,6E)-farnesyl diphosphate + H2O = Fe(II)-heme o + diphosphate</text>
        <dbReference type="Rhea" id="RHEA:28070"/>
        <dbReference type="ChEBI" id="CHEBI:15377"/>
        <dbReference type="ChEBI" id="CHEBI:33019"/>
        <dbReference type="ChEBI" id="CHEBI:60344"/>
        <dbReference type="ChEBI" id="CHEBI:60530"/>
        <dbReference type="ChEBI" id="CHEBI:175763"/>
        <dbReference type="EC" id="2.5.1.141"/>
    </reaction>
</comment>
<comment type="pathway">
    <text evidence="1">Porphyrin-containing compound metabolism; heme O biosynthesis; heme O from protoheme: step 1/1.</text>
</comment>
<comment type="subcellular location">
    <subcellularLocation>
        <location evidence="1">Cell membrane</location>
        <topology evidence="1">Multi-pass membrane protein</topology>
    </subcellularLocation>
</comment>
<comment type="miscellaneous">
    <text evidence="1">Carbon 2 of the heme B porphyrin ring is defined according to the Fischer nomenclature.</text>
</comment>
<comment type="similarity">
    <text evidence="1">Belongs to the UbiA prenyltransferase family. Protoheme IX farnesyltransferase subfamily.</text>
</comment>
<comment type="sequence caution" evidence="2">
    <conflict type="erroneous initiation">
        <sequence resource="EMBL-CDS" id="ABK64550"/>
    </conflict>
</comment>
<protein>
    <recommendedName>
        <fullName evidence="1">Protoheme IX farnesyltransferase</fullName>
        <ecNumber evidence="1">2.5.1.141</ecNumber>
    </recommendedName>
    <alternativeName>
        <fullName evidence="1">Heme B farnesyltransferase</fullName>
    </alternativeName>
    <alternativeName>
        <fullName evidence="1">Heme O synthase</fullName>
    </alternativeName>
</protein>